<proteinExistence type="evidence at protein level"/>
<sequence>MKWMVVVLVCLQLLEAAVVKVPLKKFKSIRETMKEKGLLGEFLRTHKYDPAWKYRFGDLSVTYEPMAYMDAAYFGEISIGTPPQNFLVLFDTGSSNLWVPSVYCQSQACTSHSRFNPSESSTYSTNGQTFSLQYGSGSLTGFFGYDTLTVQSIQVPNQEFGLSENEPGTNFVYAQFDGIMGLAYPALSVDEATTAMQGMVQEGALTSPVFSVYLSNQQGSSGGAVVFGGVDSSLYTGQIYWAPVTQELYWQIGIEEFLIGGQASGWCSEGCQAIVDTGTSLLTVPQQYMSALLQATGAQEDEYGQFLVNCNSIQNLPSLTFIINGVEFPLPPSSYILSNNGYCTVGVEPTYLSSQNGQPLWILGDVFLRSYYSVYDLGNNRVGFATAA</sequence>
<protein>
    <recommendedName>
        <fullName>Gastricsin</fullName>
        <ecNumber>3.4.23.3</ecNumber>
    </recommendedName>
    <alternativeName>
        <fullName>Pepsinogen C</fullName>
    </alternativeName>
</protein>
<feature type="signal peptide" evidence="2 3">
    <location>
        <begin position="1"/>
        <end position="16"/>
    </location>
</feature>
<feature type="propeptide" id="PRO_0000026056" description="Activation peptide">
    <location>
        <begin position="17"/>
        <end position="59"/>
    </location>
</feature>
<feature type="chain" id="PRO_0000026057" description="Gastricsin">
    <location>
        <begin position="60"/>
        <end position="388"/>
    </location>
</feature>
<feature type="domain" description="Peptidase A1" evidence="1">
    <location>
        <begin position="73"/>
        <end position="385"/>
    </location>
</feature>
<feature type="active site">
    <location>
        <position position="91"/>
    </location>
</feature>
<feature type="active site">
    <location>
        <position position="276"/>
    </location>
</feature>
<feature type="disulfide bond">
    <location>
        <begin position="104"/>
        <end position="109"/>
    </location>
</feature>
<feature type="disulfide bond">
    <location>
        <begin position="267"/>
        <end position="271"/>
    </location>
</feature>
<feature type="disulfide bond">
    <location>
        <begin position="310"/>
        <end position="343"/>
    </location>
</feature>
<feature type="splice variant" id="VSP_042312" description="In isoform 2." evidence="4">
    <original>QQGSSGGAVVFGGVDSSLYTGQIYWAPVTQELYWQIGIEEFLIGGQASGWCSEGCQAIVDTGTSLLTVPQQYMSALLQATGAQEDEYGQFLVNCNSIQNLPSLTFIINGVEFPLPPSSYILSNNGYCTVGVEPTYLSSQNGQPLWILGDVFLRSYYSVYDLGNNRVGFATAA</original>
    <variation>LVLESSGLGPLLTPSRAAPPSSTLQLPEKPLEQTWNILTPFTKTLPVSNLSRKVTSWAGVGIPVTCLPEAGSGGERRAECGLGVPTTRGPPRSQHHSGA</variation>
    <location>
        <begin position="217"/>
        <end position="388"/>
    </location>
</feature>
<feature type="sequence conflict" description="In Ref. 10; AA sequence." evidence="5" ref="10">
    <original>GE</original>
    <variation>ED</variation>
    <location>
        <begin position="40"/>
        <end position="41"/>
    </location>
</feature>
<feature type="sequence conflict" description="In Ref. 10; AA sequence." evidence="5" ref="10">
    <original>W</original>
    <variation>S</variation>
    <location>
        <position position="52"/>
    </location>
</feature>
<feature type="strand" evidence="7">
    <location>
        <begin position="19"/>
        <end position="25"/>
    </location>
</feature>
<feature type="helix" evidence="7">
    <location>
        <begin position="29"/>
        <end position="35"/>
    </location>
</feature>
<feature type="helix" evidence="7">
    <location>
        <begin position="39"/>
        <end position="43"/>
    </location>
</feature>
<feature type="helix" evidence="7">
    <location>
        <begin position="50"/>
        <end position="54"/>
    </location>
</feature>
<feature type="helix" evidence="7">
    <location>
        <begin position="65"/>
        <end position="68"/>
    </location>
</feature>
<feature type="strand" evidence="7">
    <location>
        <begin position="73"/>
        <end position="79"/>
    </location>
</feature>
<feature type="turn" evidence="7">
    <location>
        <begin position="80"/>
        <end position="83"/>
    </location>
</feature>
<feature type="strand" evidence="7">
    <location>
        <begin position="84"/>
        <end position="91"/>
    </location>
</feature>
<feature type="strand" evidence="7">
    <location>
        <begin position="97"/>
        <end position="101"/>
    </location>
</feature>
<feature type="helix" evidence="7">
    <location>
        <begin position="107"/>
        <end position="110"/>
    </location>
</feature>
<feature type="helix" evidence="7">
    <location>
        <begin position="117"/>
        <end position="119"/>
    </location>
</feature>
<feature type="strand" evidence="7">
    <location>
        <begin position="124"/>
        <end position="134"/>
    </location>
</feature>
<feature type="strand" evidence="7">
    <location>
        <begin position="137"/>
        <end position="150"/>
    </location>
</feature>
<feature type="strand" evidence="7">
    <location>
        <begin position="153"/>
        <end position="165"/>
    </location>
</feature>
<feature type="helix" evidence="7">
    <location>
        <begin position="169"/>
        <end position="173"/>
    </location>
</feature>
<feature type="strand" evidence="7">
    <location>
        <begin position="178"/>
        <end position="181"/>
    </location>
</feature>
<feature type="helix" evidence="6">
    <location>
        <begin position="185"/>
        <end position="187"/>
    </location>
</feature>
<feature type="helix" evidence="6">
    <location>
        <begin position="189"/>
        <end position="191"/>
    </location>
</feature>
<feature type="helix" evidence="7">
    <location>
        <begin position="195"/>
        <end position="201"/>
    </location>
</feature>
<feature type="strand" evidence="7">
    <location>
        <begin position="205"/>
        <end position="214"/>
    </location>
</feature>
<feature type="strand" evidence="7">
    <location>
        <begin position="219"/>
        <end position="229"/>
    </location>
</feature>
<feature type="helix" evidence="7">
    <location>
        <begin position="232"/>
        <end position="234"/>
    </location>
</feature>
<feature type="strand" evidence="7">
    <location>
        <begin position="235"/>
        <end position="244"/>
    </location>
</feature>
<feature type="strand" evidence="7">
    <location>
        <begin position="246"/>
        <end position="249"/>
    </location>
</feature>
<feature type="strand" evidence="7">
    <location>
        <begin position="251"/>
        <end position="254"/>
    </location>
</feature>
<feature type="strand" evidence="7">
    <location>
        <begin position="256"/>
        <end position="259"/>
    </location>
</feature>
<feature type="turn" evidence="7">
    <location>
        <begin position="266"/>
        <end position="269"/>
    </location>
</feature>
<feature type="strand" evidence="7">
    <location>
        <begin position="271"/>
        <end position="275"/>
    </location>
</feature>
<feature type="strand" evidence="7">
    <location>
        <begin position="281"/>
        <end position="285"/>
    </location>
</feature>
<feature type="helix" evidence="7">
    <location>
        <begin position="286"/>
        <end position="288"/>
    </location>
</feature>
<feature type="helix" evidence="7">
    <location>
        <begin position="289"/>
        <end position="296"/>
    </location>
</feature>
<feature type="strand" evidence="7">
    <location>
        <begin position="306"/>
        <end position="308"/>
    </location>
</feature>
<feature type="helix" evidence="7">
    <location>
        <begin position="310"/>
        <end position="315"/>
    </location>
</feature>
<feature type="strand" evidence="7">
    <location>
        <begin position="319"/>
        <end position="323"/>
    </location>
</feature>
<feature type="strand" evidence="7">
    <location>
        <begin position="326"/>
        <end position="330"/>
    </location>
</feature>
<feature type="helix" evidence="7">
    <location>
        <begin position="332"/>
        <end position="335"/>
    </location>
</feature>
<feature type="strand" evidence="7">
    <location>
        <begin position="336"/>
        <end position="338"/>
    </location>
</feature>
<feature type="strand" evidence="7">
    <location>
        <begin position="343"/>
        <end position="350"/>
    </location>
</feature>
<feature type="strand" evidence="7">
    <location>
        <begin position="360"/>
        <end position="363"/>
    </location>
</feature>
<feature type="helix" evidence="7">
    <location>
        <begin position="365"/>
        <end position="368"/>
    </location>
</feature>
<feature type="strand" evidence="7">
    <location>
        <begin position="371"/>
        <end position="376"/>
    </location>
</feature>
<feature type="turn" evidence="7">
    <location>
        <begin position="377"/>
        <end position="380"/>
    </location>
</feature>
<feature type="strand" evidence="7">
    <location>
        <begin position="381"/>
        <end position="387"/>
    </location>
</feature>
<gene>
    <name type="primary">PGC</name>
</gene>
<accession>P20142</accession>
<accession>B4DVZ3</accession>
<accession>Q5T3D7</accession>
<accession>Q5T3D8</accession>
<comment type="function">
    <text>Hydrolyzes a variety of proteins.</text>
</comment>
<comment type="catalytic activity">
    <reaction>
        <text>More restricted specificity than pepsin A, but shows preferential cleavage at Tyr-|-Xaa bonds. High activity on hemoglobin.</text>
        <dbReference type="EC" id="3.4.23.3"/>
    </reaction>
</comment>
<comment type="subcellular location">
    <subcellularLocation>
        <location>Secreted</location>
    </subcellularLocation>
</comment>
<comment type="alternative products">
    <event type="alternative splicing"/>
    <isoform>
        <id>P20142-1</id>
        <name>1</name>
        <sequence type="displayed"/>
    </isoform>
    <isoform>
        <id>P20142-2</id>
        <name>2</name>
        <sequence type="described" ref="VSP_042312"/>
    </isoform>
</comment>
<comment type="similarity">
    <text evidence="5">Belongs to the peptidase A1 family.</text>
</comment>
<comment type="sequence caution" evidence="5">
    <conflict type="erroneous initiation">
        <sequence resource="EMBL-CDS" id="AAA60062"/>
    </conflict>
</comment>
<organism>
    <name type="scientific">Homo sapiens</name>
    <name type="common">Human</name>
    <dbReference type="NCBI Taxonomy" id="9606"/>
    <lineage>
        <taxon>Eukaryota</taxon>
        <taxon>Metazoa</taxon>
        <taxon>Chordata</taxon>
        <taxon>Craniata</taxon>
        <taxon>Vertebrata</taxon>
        <taxon>Euteleostomi</taxon>
        <taxon>Mammalia</taxon>
        <taxon>Eutheria</taxon>
        <taxon>Euarchontoglires</taxon>
        <taxon>Primates</taxon>
        <taxon>Haplorrhini</taxon>
        <taxon>Catarrhini</taxon>
        <taxon>Hominidae</taxon>
        <taxon>Homo</taxon>
    </lineage>
</organism>
<name>PEPC_HUMAN</name>
<keyword id="KW-0002">3D-structure</keyword>
<keyword id="KW-0025">Alternative splicing</keyword>
<keyword id="KW-0064">Aspartyl protease</keyword>
<keyword id="KW-0222">Digestion</keyword>
<keyword id="KW-0903">Direct protein sequencing</keyword>
<keyword id="KW-1015">Disulfide bond</keyword>
<keyword id="KW-0378">Hydrolase</keyword>
<keyword id="KW-0645">Protease</keyword>
<keyword id="KW-1267">Proteomics identification</keyword>
<keyword id="KW-1185">Reference proteome</keyword>
<keyword id="KW-0964">Secreted</keyword>
<keyword id="KW-0732">Signal</keyword>
<keyword id="KW-0865">Zymogen</keyword>
<evidence type="ECO:0000255" key="1">
    <source>
        <dbReference type="PROSITE-ProRule" id="PRU01103"/>
    </source>
</evidence>
<evidence type="ECO:0000269" key="2">
    <source>
    </source>
</evidence>
<evidence type="ECO:0000269" key="3">
    <source>
    </source>
</evidence>
<evidence type="ECO:0000303" key="4">
    <source>
    </source>
</evidence>
<evidence type="ECO:0000305" key="5"/>
<evidence type="ECO:0007829" key="6">
    <source>
        <dbReference type="PDB" id="1AVF"/>
    </source>
</evidence>
<evidence type="ECO:0007829" key="7">
    <source>
        <dbReference type="PDB" id="1HTR"/>
    </source>
</evidence>
<reference key="1">
    <citation type="journal article" date="1988" name="J. Biol. Chem.">
        <title>Primary structure of human pepsinogen C gene.</title>
        <authorList>
            <person name="Hayano T."/>
            <person name="Sogawa K."/>
            <person name="Ichihara Y."/>
            <person name="Fujii-Kuriyama Y."/>
            <person name="Takahashi K."/>
        </authorList>
    </citation>
    <scope>NUCLEOTIDE SEQUENCE [GENOMIC DNA]</scope>
</reference>
<reference key="2">
    <citation type="journal article" date="1988" name="J. Biol. Chem.">
        <authorList>
            <person name="Hayano T."/>
            <person name="Sogawa K."/>
            <person name="Ichihara Y."/>
            <person name="Fujii-Kuriyama Y."/>
            <person name="Takahashi K."/>
        </authorList>
    </citation>
    <scope>ERRATUM OF PUBMED:3335549</scope>
</reference>
<reference key="3">
    <citation type="journal article" date="1989" name="J. Biol. Chem.">
        <title>Human pepsinogen C (progastricsin). Isolation of cDNA clones, localization to chromosome 6, and sequence homology with pepsinogen A.</title>
        <authorList>
            <person name="Taggart R.T."/>
            <person name="Cass L.G."/>
            <person name="Mohandas T.K."/>
            <person name="Derby P."/>
            <person name="Barr P.J."/>
            <person name="Pals G."/>
            <person name="Bell G.I."/>
        </authorList>
    </citation>
    <scope>NUCLEOTIDE SEQUENCE [MRNA] (ISOFORM 1)</scope>
</reference>
<reference key="4">
    <citation type="journal article" date="1989" name="Genomics">
        <title>Human pepsinogen C (progastricsin) polymorphism: evidence for a single locus located at 6p21.1-pter.</title>
        <authorList>
            <person name="Pals G."/>
            <person name="Azuma T."/>
            <person name="Mohandas T.K."/>
            <person name="Bell G.I."/>
            <person name="Bacon J."/>
            <person name="Samloff I.M."/>
            <person name="Walz D.A."/>
            <person name="Barr P.J."/>
            <person name="Taggart R.T."/>
        </authorList>
    </citation>
    <scope>NUCLEOTIDE SEQUENCE [GENOMIC DNA]</scope>
    <source>
        <tissue>Placenta</tissue>
    </source>
</reference>
<reference key="5">
    <citation type="submission" date="1996-11" db="EMBL/GenBank/DDBJ databases">
        <title>cDNA sequence of human gastricsin.</title>
        <authorList>
            <person name="Wong R.N.S."/>
            <person name="Tang J."/>
        </authorList>
    </citation>
    <scope>NUCLEOTIDE SEQUENCE [MRNA] (ISOFORM 1)</scope>
</reference>
<reference key="6">
    <citation type="journal article" date="2004" name="Nat. Genet.">
        <title>Complete sequencing and characterization of 21,243 full-length human cDNAs.</title>
        <authorList>
            <person name="Ota T."/>
            <person name="Suzuki Y."/>
            <person name="Nishikawa T."/>
            <person name="Otsuki T."/>
            <person name="Sugiyama T."/>
            <person name="Irie R."/>
            <person name="Wakamatsu A."/>
            <person name="Hayashi K."/>
            <person name="Sato H."/>
            <person name="Nagai K."/>
            <person name="Kimura K."/>
            <person name="Makita H."/>
            <person name="Sekine M."/>
            <person name="Obayashi M."/>
            <person name="Nishi T."/>
            <person name="Shibahara T."/>
            <person name="Tanaka T."/>
            <person name="Ishii S."/>
            <person name="Yamamoto J."/>
            <person name="Saito K."/>
            <person name="Kawai Y."/>
            <person name="Isono Y."/>
            <person name="Nakamura Y."/>
            <person name="Nagahari K."/>
            <person name="Murakami K."/>
            <person name="Yasuda T."/>
            <person name="Iwayanagi T."/>
            <person name="Wagatsuma M."/>
            <person name="Shiratori A."/>
            <person name="Sudo H."/>
            <person name="Hosoiri T."/>
            <person name="Kaku Y."/>
            <person name="Kodaira H."/>
            <person name="Kondo H."/>
            <person name="Sugawara M."/>
            <person name="Takahashi M."/>
            <person name="Kanda K."/>
            <person name="Yokoi T."/>
            <person name="Furuya T."/>
            <person name="Kikkawa E."/>
            <person name="Omura Y."/>
            <person name="Abe K."/>
            <person name="Kamihara K."/>
            <person name="Katsuta N."/>
            <person name="Sato K."/>
            <person name="Tanikawa M."/>
            <person name="Yamazaki M."/>
            <person name="Ninomiya K."/>
            <person name="Ishibashi T."/>
            <person name="Yamashita H."/>
            <person name="Murakawa K."/>
            <person name="Fujimori K."/>
            <person name="Tanai H."/>
            <person name="Kimata M."/>
            <person name="Watanabe M."/>
            <person name="Hiraoka S."/>
            <person name="Chiba Y."/>
            <person name="Ishida S."/>
            <person name="Ono Y."/>
            <person name="Takiguchi S."/>
            <person name="Watanabe S."/>
            <person name="Yosida M."/>
            <person name="Hotuta T."/>
            <person name="Kusano J."/>
            <person name="Kanehori K."/>
            <person name="Takahashi-Fujii A."/>
            <person name="Hara H."/>
            <person name="Tanase T.-O."/>
            <person name="Nomura Y."/>
            <person name="Togiya S."/>
            <person name="Komai F."/>
            <person name="Hara R."/>
            <person name="Takeuchi K."/>
            <person name="Arita M."/>
            <person name="Imose N."/>
            <person name="Musashino K."/>
            <person name="Yuuki H."/>
            <person name="Oshima A."/>
            <person name="Sasaki N."/>
            <person name="Aotsuka S."/>
            <person name="Yoshikawa Y."/>
            <person name="Matsunawa H."/>
            <person name="Ichihara T."/>
            <person name="Shiohata N."/>
            <person name="Sano S."/>
            <person name="Moriya S."/>
            <person name="Momiyama H."/>
            <person name="Satoh N."/>
            <person name="Takami S."/>
            <person name="Terashima Y."/>
            <person name="Suzuki O."/>
            <person name="Nakagawa S."/>
            <person name="Senoh A."/>
            <person name="Mizoguchi H."/>
            <person name="Goto Y."/>
            <person name="Shimizu F."/>
            <person name="Wakebe H."/>
            <person name="Hishigaki H."/>
            <person name="Watanabe T."/>
            <person name="Sugiyama A."/>
            <person name="Takemoto M."/>
            <person name="Kawakami B."/>
            <person name="Yamazaki M."/>
            <person name="Watanabe K."/>
            <person name="Kumagai A."/>
            <person name="Itakura S."/>
            <person name="Fukuzumi Y."/>
            <person name="Fujimori Y."/>
            <person name="Komiyama M."/>
            <person name="Tashiro H."/>
            <person name="Tanigami A."/>
            <person name="Fujiwara T."/>
            <person name="Ono T."/>
            <person name="Yamada K."/>
            <person name="Fujii Y."/>
            <person name="Ozaki K."/>
            <person name="Hirao M."/>
            <person name="Ohmori Y."/>
            <person name="Kawabata A."/>
            <person name="Hikiji T."/>
            <person name="Kobatake N."/>
            <person name="Inagaki H."/>
            <person name="Ikema Y."/>
            <person name="Okamoto S."/>
            <person name="Okitani R."/>
            <person name="Kawakami T."/>
            <person name="Noguchi S."/>
            <person name="Itoh T."/>
            <person name="Shigeta K."/>
            <person name="Senba T."/>
            <person name="Matsumura K."/>
            <person name="Nakajima Y."/>
            <person name="Mizuno T."/>
            <person name="Morinaga M."/>
            <person name="Sasaki M."/>
            <person name="Togashi T."/>
            <person name="Oyama M."/>
            <person name="Hata H."/>
            <person name="Watanabe M."/>
            <person name="Komatsu T."/>
            <person name="Mizushima-Sugano J."/>
            <person name="Satoh T."/>
            <person name="Shirai Y."/>
            <person name="Takahashi Y."/>
            <person name="Nakagawa K."/>
            <person name="Okumura K."/>
            <person name="Nagase T."/>
            <person name="Nomura N."/>
            <person name="Kikuchi H."/>
            <person name="Masuho Y."/>
            <person name="Yamashita R."/>
            <person name="Nakai K."/>
            <person name="Yada T."/>
            <person name="Nakamura Y."/>
            <person name="Ohara O."/>
            <person name="Isogai T."/>
            <person name="Sugano S."/>
        </authorList>
    </citation>
    <scope>NUCLEOTIDE SEQUENCE [LARGE SCALE MRNA] (ISOFORM 2)</scope>
    <source>
        <tissue>Stomach</tissue>
    </source>
</reference>
<reference key="7">
    <citation type="journal article" date="2003" name="Nature">
        <title>The DNA sequence and analysis of human chromosome 6.</title>
        <authorList>
            <person name="Mungall A.J."/>
            <person name="Palmer S.A."/>
            <person name="Sims S.K."/>
            <person name="Edwards C.A."/>
            <person name="Ashurst J.L."/>
            <person name="Wilming L."/>
            <person name="Jones M.C."/>
            <person name="Horton R."/>
            <person name="Hunt S.E."/>
            <person name="Scott C.E."/>
            <person name="Gilbert J.G.R."/>
            <person name="Clamp M.E."/>
            <person name="Bethel G."/>
            <person name="Milne S."/>
            <person name="Ainscough R."/>
            <person name="Almeida J.P."/>
            <person name="Ambrose K.D."/>
            <person name="Andrews T.D."/>
            <person name="Ashwell R.I.S."/>
            <person name="Babbage A.K."/>
            <person name="Bagguley C.L."/>
            <person name="Bailey J."/>
            <person name="Banerjee R."/>
            <person name="Barker D.J."/>
            <person name="Barlow K.F."/>
            <person name="Bates K."/>
            <person name="Beare D.M."/>
            <person name="Beasley H."/>
            <person name="Beasley O."/>
            <person name="Bird C.P."/>
            <person name="Blakey S.E."/>
            <person name="Bray-Allen S."/>
            <person name="Brook J."/>
            <person name="Brown A.J."/>
            <person name="Brown J.Y."/>
            <person name="Burford D.C."/>
            <person name="Burrill W."/>
            <person name="Burton J."/>
            <person name="Carder C."/>
            <person name="Carter N.P."/>
            <person name="Chapman J.C."/>
            <person name="Clark S.Y."/>
            <person name="Clark G."/>
            <person name="Clee C.M."/>
            <person name="Clegg S."/>
            <person name="Cobley V."/>
            <person name="Collier R.E."/>
            <person name="Collins J.E."/>
            <person name="Colman L.K."/>
            <person name="Corby N.R."/>
            <person name="Coville G.J."/>
            <person name="Culley K.M."/>
            <person name="Dhami P."/>
            <person name="Davies J."/>
            <person name="Dunn M."/>
            <person name="Earthrowl M.E."/>
            <person name="Ellington A.E."/>
            <person name="Evans K.A."/>
            <person name="Faulkner L."/>
            <person name="Francis M.D."/>
            <person name="Frankish A."/>
            <person name="Frankland J."/>
            <person name="French L."/>
            <person name="Garner P."/>
            <person name="Garnett J."/>
            <person name="Ghori M.J."/>
            <person name="Gilby L.M."/>
            <person name="Gillson C.J."/>
            <person name="Glithero R.J."/>
            <person name="Grafham D.V."/>
            <person name="Grant M."/>
            <person name="Gribble S."/>
            <person name="Griffiths C."/>
            <person name="Griffiths M.N.D."/>
            <person name="Hall R."/>
            <person name="Halls K.S."/>
            <person name="Hammond S."/>
            <person name="Harley J.L."/>
            <person name="Hart E.A."/>
            <person name="Heath P.D."/>
            <person name="Heathcott R."/>
            <person name="Holmes S.J."/>
            <person name="Howden P.J."/>
            <person name="Howe K.L."/>
            <person name="Howell G.R."/>
            <person name="Huckle E."/>
            <person name="Humphray S.J."/>
            <person name="Humphries M.D."/>
            <person name="Hunt A.R."/>
            <person name="Johnson C.M."/>
            <person name="Joy A.A."/>
            <person name="Kay M."/>
            <person name="Keenan S.J."/>
            <person name="Kimberley A.M."/>
            <person name="King A."/>
            <person name="Laird G.K."/>
            <person name="Langford C."/>
            <person name="Lawlor S."/>
            <person name="Leongamornlert D.A."/>
            <person name="Leversha M."/>
            <person name="Lloyd C.R."/>
            <person name="Lloyd D.M."/>
            <person name="Loveland J.E."/>
            <person name="Lovell J."/>
            <person name="Martin S."/>
            <person name="Mashreghi-Mohammadi M."/>
            <person name="Maslen G.L."/>
            <person name="Matthews L."/>
            <person name="McCann O.T."/>
            <person name="McLaren S.J."/>
            <person name="McLay K."/>
            <person name="McMurray A."/>
            <person name="Moore M.J.F."/>
            <person name="Mullikin J.C."/>
            <person name="Niblett D."/>
            <person name="Nickerson T."/>
            <person name="Novik K.L."/>
            <person name="Oliver K."/>
            <person name="Overton-Larty E.K."/>
            <person name="Parker A."/>
            <person name="Patel R."/>
            <person name="Pearce A.V."/>
            <person name="Peck A.I."/>
            <person name="Phillimore B.J.C.T."/>
            <person name="Phillips S."/>
            <person name="Plumb R.W."/>
            <person name="Porter K.M."/>
            <person name="Ramsey Y."/>
            <person name="Ranby S.A."/>
            <person name="Rice C.M."/>
            <person name="Ross M.T."/>
            <person name="Searle S.M."/>
            <person name="Sehra H.K."/>
            <person name="Sheridan E."/>
            <person name="Skuce C.D."/>
            <person name="Smith S."/>
            <person name="Smith M."/>
            <person name="Spraggon L."/>
            <person name="Squares S.L."/>
            <person name="Steward C.A."/>
            <person name="Sycamore N."/>
            <person name="Tamlyn-Hall G."/>
            <person name="Tester J."/>
            <person name="Theaker A.J."/>
            <person name="Thomas D.W."/>
            <person name="Thorpe A."/>
            <person name="Tracey A."/>
            <person name="Tromans A."/>
            <person name="Tubby B."/>
            <person name="Wall M."/>
            <person name="Wallis J.M."/>
            <person name="West A.P."/>
            <person name="White S.S."/>
            <person name="Whitehead S.L."/>
            <person name="Whittaker H."/>
            <person name="Wild A."/>
            <person name="Willey D.J."/>
            <person name="Wilmer T.E."/>
            <person name="Wood J.M."/>
            <person name="Wray P.W."/>
            <person name="Wyatt J.C."/>
            <person name="Young L."/>
            <person name="Younger R.M."/>
            <person name="Bentley D.R."/>
            <person name="Coulson A."/>
            <person name="Durbin R.M."/>
            <person name="Hubbard T."/>
            <person name="Sulston J.E."/>
            <person name="Dunham I."/>
            <person name="Rogers J."/>
            <person name="Beck S."/>
        </authorList>
    </citation>
    <scope>NUCLEOTIDE SEQUENCE [LARGE SCALE GENOMIC DNA]</scope>
</reference>
<reference key="8">
    <citation type="journal article" date="2004" name="Genome Res.">
        <title>The status, quality, and expansion of the NIH full-length cDNA project: the Mammalian Gene Collection (MGC).</title>
        <authorList>
            <consortium name="The MGC Project Team"/>
        </authorList>
    </citation>
    <scope>NUCLEOTIDE SEQUENCE [LARGE SCALE MRNA] (ISOFORM 1)</scope>
    <source>
        <tissue>Liver</tissue>
    </source>
</reference>
<reference key="9">
    <citation type="journal article" date="1989" name="J. Biochem.">
        <title>A comparative study on the NH2-terminal amino acid sequences and some other properties of six isozymic forms of human pepsinogens and pepsins.</title>
        <authorList>
            <person name="Athauda S.B.P."/>
            <person name="Tanji M."/>
            <person name="Kageyama T."/>
            <person name="Takahashi K."/>
        </authorList>
    </citation>
    <scope>PROTEIN SEQUENCE OF 17-101</scope>
</reference>
<reference key="10">
    <citation type="journal article" date="1982" name="Eur. J. Biochem.">
        <title>Human progastricsin. Analysis of intermediates during activation into gastricsin and determination of the amino acid sequence of the propart.</title>
        <authorList>
            <person name="Foltmann B."/>
            <person name="Jensen A.L."/>
        </authorList>
    </citation>
    <scope>PROTEIN SEQUENCE OF 17-64</scope>
</reference>
<reference key="11">
    <citation type="journal article" date="1995" name="J. Mol. Biol.">
        <title>Crystal and molecular structures of human progastricsin at 1.62-A resolution.</title>
        <authorList>
            <person name="Moore S.A."/>
            <person name="Sielecki A.R."/>
            <person name="Chernaia M.M."/>
            <person name="Tarasova N.I."/>
            <person name="James M.N.G."/>
        </authorList>
    </citation>
    <scope>X-RAY CRYSTALLOGRAPHY (1.62 ANGSTROMS)</scope>
</reference>
<reference key="12">
    <citation type="journal article" date="1997" name="Nat. Struct. Biol.">
        <title>Structural characterization of activation 'intermediate 2' on the pathway to human gastricsin.</title>
        <authorList>
            <person name="Khan A.R."/>
            <person name="Cherney M.M."/>
            <person name="Tarasova N.I."/>
            <person name="James M.N."/>
        </authorList>
    </citation>
    <scope>X-RAY CRYSTALLOGRAPHY (2.36 ANGSTROMS)</scope>
</reference>
<dbReference type="EC" id="3.4.23.3"/>
<dbReference type="EMBL" id="M18667">
    <property type="protein sequence ID" value="AAA60062.1"/>
    <property type="status" value="ALT_INIT"/>
    <property type="molecule type" value="Genomic_DNA"/>
</dbReference>
<dbReference type="EMBL" id="M18659">
    <property type="protein sequence ID" value="AAA60062.1"/>
    <property type="status" value="JOINED"/>
    <property type="molecule type" value="Genomic_DNA"/>
</dbReference>
<dbReference type="EMBL" id="M18660">
    <property type="protein sequence ID" value="AAA60062.1"/>
    <property type="status" value="JOINED"/>
    <property type="molecule type" value="Genomic_DNA"/>
</dbReference>
<dbReference type="EMBL" id="M18661">
    <property type="protein sequence ID" value="AAA60062.1"/>
    <property type="status" value="JOINED"/>
    <property type="molecule type" value="Genomic_DNA"/>
</dbReference>
<dbReference type="EMBL" id="M18662">
    <property type="protein sequence ID" value="AAA60062.1"/>
    <property type="status" value="JOINED"/>
    <property type="molecule type" value="Genomic_DNA"/>
</dbReference>
<dbReference type="EMBL" id="M18663">
    <property type="protein sequence ID" value="AAA60062.1"/>
    <property type="status" value="JOINED"/>
    <property type="molecule type" value="Genomic_DNA"/>
</dbReference>
<dbReference type="EMBL" id="M18664">
    <property type="protein sequence ID" value="AAA60062.1"/>
    <property type="status" value="JOINED"/>
    <property type="molecule type" value="Genomic_DNA"/>
</dbReference>
<dbReference type="EMBL" id="M18665">
    <property type="protein sequence ID" value="AAA60062.1"/>
    <property type="status" value="JOINED"/>
    <property type="molecule type" value="Genomic_DNA"/>
</dbReference>
<dbReference type="EMBL" id="M18666">
    <property type="protein sequence ID" value="AAA60062.1"/>
    <property type="status" value="JOINED"/>
    <property type="molecule type" value="Genomic_DNA"/>
</dbReference>
<dbReference type="EMBL" id="J04443">
    <property type="protein sequence ID" value="AAA60074.1"/>
    <property type="molecule type" value="mRNA"/>
</dbReference>
<dbReference type="EMBL" id="M23077">
    <property type="protein sequence ID" value="AAA60063.1"/>
    <property type="molecule type" value="Genomic_DNA"/>
</dbReference>
<dbReference type="EMBL" id="M23069">
    <property type="protein sequence ID" value="AAA60063.1"/>
    <property type="status" value="JOINED"/>
    <property type="molecule type" value="Genomic_DNA"/>
</dbReference>
<dbReference type="EMBL" id="M23070">
    <property type="protein sequence ID" value="AAA60063.1"/>
    <property type="status" value="JOINED"/>
    <property type="molecule type" value="Genomic_DNA"/>
</dbReference>
<dbReference type="EMBL" id="M23071">
    <property type="protein sequence ID" value="AAA60063.1"/>
    <property type="status" value="JOINED"/>
    <property type="molecule type" value="Genomic_DNA"/>
</dbReference>
<dbReference type="EMBL" id="M23072">
    <property type="protein sequence ID" value="AAA60063.1"/>
    <property type="status" value="JOINED"/>
    <property type="molecule type" value="Genomic_DNA"/>
</dbReference>
<dbReference type="EMBL" id="M23073">
    <property type="protein sequence ID" value="AAA60063.1"/>
    <property type="status" value="JOINED"/>
    <property type="molecule type" value="Genomic_DNA"/>
</dbReference>
<dbReference type="EMBL" id="M23074">
    <property type="protein sequence ID" value="AAA60063.1"/>
    <property type="status" value="JOINED"/>
    <property type="molecule type" value="Genomic_DNA"/>
</dbReference>
<dbReference type="EMBL" id="M23075">
    <property type="protein sequence ID" value="AAA60063.1"/>
    <property type="status" value="JOINED"/>
    <property type="molecule type" value="Genomic_DNA"/>
</dbReference>
<dbReference type="EMBL" id="U75272">
    <property type="protein sequence ID" value="AAB18273.1"/>
    <property type="molecule type" value="mRNA"/>
</dbReference>
<dbReference type="EMBL" id="AK301298">
    <property type="protein sequence ID" value="BAG62855.1"/>
    <property type="molecule type" value="mRNA"/>
</dbReference>
<dbReference type="EMBL" id="AL365205">
    <property type="status" value="NOT_ANNOTATED_CDS"/>
    <property type="molecule type" value="Genomic_DNA"/>
</dbReference>
<dbReference type="EMBL" id="BC073740">
    <property type="protein sequence ID" value="AAH73740.1"/>
    <property type="molecule type" value="mRNA"/>
</dbReference>
<dbReference type="CCDS" id="CCDS4859.1">
    <molecule id="P20142-1"/>
</dbReference>
<dbReference type="CCDS" id="CCDS55000.1">
    <molecule id="P20142-2"/>
</dbReference>
<dbReference type="PIR" id="A29937">
    <property type="entry name" value="A29937"/>
</dbReference>
<dbReference type="RefSeq" id="NP_001159896.1">
    <molecule id="P20142-2"/>
    <property type="nucleotide sequence ID" value="NM_001166424.2"/>
</dbReference>
<dbReference type="RefSeq" id="NP_002621.1">
    <molecule id="P20142-1"/>
    <property type="nucleotide sequence ID" value="NM_002630.4"/>
</dbReference>
<dbReference type="PDB" id="1AVF">
    <property type="method" value="X-ray"/>
    <property type="resolution" value="2.36 A"/>
    <property type="chains" value="A/J=60-388, P/Q=17-42"/>
</dbReference>
<dbReference type="PDB" id="1HTR">
    <property type="method" value="X-ray"/>
    <property type="resolution" value="1.62 A"/>
    <property type="chains" value="B=60-388, P=17-59"/>
</dbReference>
<dbReference type="PDBsum" id="1AVF"/>
<dbReference type="PDBsum" id="1HTR"/>
<dbReference type="SMR" id="P20142"/>
<dbReference type="BioGRID" id="111246">
    <property type="interactions" value="9"/>
</dbReference>
<dbReference type="FunCoup" id="P20142">
    <property type="interactions" value="131"/>
</dbReference>
<dbReference type="IntAct" id="P20142">
    <property type="interactions" value="1"/>
</dbReference>
<dbReference type="STRING" id="9606.ENSP00000362116"/>
<dbReference type="BindingDB" id="P20142"/>
<dbReference type="ChEMBL" id="CHEMBL2136"/>
<dbReference type="GuidetoPHARMACOLOGY" id="2391"/>
<dbReference type="MEROPS" id="A01.003"/>
<dbReference type="TCDB" id="8.A.32.1.4">
    <property type="family name" value="the Beta-amyloid cleaving enzyme (bace1) family"/>
</dbReference>
<dbReference type="iPTMnet" id="P20142"/>
<dbReference type="PhosphoSitePlus" id="P20142"/>
<dbReference type="BioMuta" id="PGC"/>
<dbReference type="DMDM" id="129796"/>
<dbReference type="MassIVE" id="P20142"/>
<dbReference type="PaxDb" id="9606-ENSP00000362116"/>
<dbReference type="PeptideAtlas" id="P20142"/>
<dbReference type="ProteomicsDB" id="53726">
    <molecule id="P20142-1"/>
</dbReference>
<dbReference type="ProteomicsDB" id="53727">
    <molecule id="P20142-2"/>
</dbReference>
<dbReference type="Antibodypedia" id="15914">
    <property type="antibodies" value="487 antibodies from 30 providers"/>
</dbReference>
<dbReference type="DNASU" id="5225"/>
<dbReference type="Ensembl" id="ENST00000373025.7">
    <molecule id="P20142-1"/>
    <property type="protein sequence ID" value="ENSP00000362116.3"/>
    <property type="gene ID" value="ENSG00000096088.16"/>
</dbReference>
<dbReference type="Ensembl" id="ENST00000425343.6">
    <molecule id="P20142-2"/>
    <property type="protein sequence ID" value="ENSP00000405094.2"/>
    <property type="gene ID" value="ENSG00000096088.16"/>
</dbReference>
<dbReference type="GeneID" id="5225"/>
<dbReference type="KEGG" id="hsa:5225"/>
<dbReference type="MANE-Select" id="ENST00000373025.7">
    <property type="protein sequence ID" value="ENSP00000362116.3"/>
    <property type="RefSeq nucleotide sequence ID" value="NM_002630.4"/>
    <property type="RefSeq protein sequence ID" value="NP_002621.1"/>
</dbReference>
<dbReference type="UCSC" id="uc003ora.3">
    <molecule id="P20142-1"/>
    <property type="organism name" value="human"/>
</dbReference>
<dbReference type="AGR" id="HGNC:8890"/>
<dbReference type="CTD" id="5225"/>
<dbReference type="DisGeNET" id="5225"/>
<dbReference type="GeneCards" id="PGC"/>
<dbReference type="HGNC" id="HGNC:8890">
    <property type="gene designation" value="PGC"/>
</dbReference>
<dbReference type="HPA" id="ENSG00000096088">
    <property type="expression patterns" value="Tissue enriched (stomach)"/>
</dbReference>
<dbReference type="MIM" id="169740">
    <property type="type" value="gene"/>
</dbReference>
<dbReference type="neXtProt" id="NX_P20142"/>
<dbReference type="OpenTargets" id="ENSG00000096088"/>
<dbReference type="PharmGKB" id="PA33228"/>
<dbReference type="VEuPathDB" id="HostDB:ENSG00000096088"/>
<dbReference type="eggNOG" id="KOG1339">
    <property type="taxonomic scope" value="Eukaryota"/>
</dbReference>
<dbReference type="GeneTree" id="ENSGT00940000160626"/>
<dbReference type="HOGENOM" id="CLU_013253_3_0_1"/>
<dbReference type="InParanoid" id="P20142"/>
<dbReference type="OMA" id="YSGEIYW"/>
<dbReference type="OrthoDB" id="771136at2759"/>
<dbReference type="PAN-GO" id="P20142">
    <property type="GO annotations" value="1 GO annotation based on evolutionary models"/>
</dbReference>
<dbReference type="PhylomeDB" id="P20142"/>
<dbReference type="TreeFam" id="TF314990"/>
<dbReference type="BRENDA" id="3.4.23.3">
    <property type="organism ID" value="2681"/>
</dbReference>
<dbReference type="PathwayCommons" id="P20142"/>
<dbReference type="SignaLink" id="P20142"/>
<dbReference type="BioGRID-ORCS" id="5225">
    <property type="hits" value="16 hits in 1146 CRISPR screens"/>
</dbReference>
<dbReference type="ChiTaRS" id="PGC">
    <property type="organism name" value="human"/>
</dbReference>
<dbReference type="EvolutionaryTrace" id="P20142"/>
<dbReference type="GeneWiki" id="Gastricsin"/>
<dbReference type="GenomeRNAi" id="5225"/>
<dbReference type="Pharos" id="P20142">
    <property type="development level" value="Tchem"/>
</dbReference>
<dbReference type="PRO" id="PR:P20142"/>
<dbReference type="Proteomes" id="UP000005640">
    <property type="component" value="Chromosome 6"/>
</dbReference>
<dbReference type="RNAct" id="P20142">
    <property type="molecule type" value="protein"/>
</dbReference>
<dbReference type="Bgee" id="ENSG00000096088">
    <property type="expression patterns" value="Expressed in pylorus and 104 other cell types or tissues"/>
</dbReference>
<dbReference type="ExpressionAtlas" id="P20142">
    <property type="expression patterns" value="baseline and differential"/>
</dbReference>
<dbReference type="GO" id="GO:0005615">
    <property type="term" value="C:extracellular space"/>
    <property type="evidence" value="ECO:0000314"/>
    <property type="project" value="UniProtKB"/>
</dbReference>
<dbReference type="GO" id="GO:0004190">
    <property type="term" value="F:aspartic-type endopeptidase activity"/>
    <property type="evidence" value="ECO:0000315"/>
    <property type="project" value="UniProtKB"/>
</dbReference>
<dbReference type="GO" id="GO:0007586">
    <property type="term" value="P:digestion"/>
    <property type="evidence" value="ECO:0000304"/>
    <property type="project" value="ProtInc"/>
</dbReference>
<dbReference type="GO" id="GO:0002803">
    <property type="term" value="P:positive regulation of antibacterial peptide production"/>
    <property type="evidence" value="ECO:0000315"/>
    <property type="project" value="UniProtKB"/>
</dbReference>
<dbReference type="GO" id="GO:0006508">
    <property type="term" value="P:proteolysis"/>
    <property type="evidence" value="ECO:0000318"/>
    <property type="project" value="GO_Central"/>
</dbReference>
<dbReference type="CDD" id="cd05477">
    <property type="entry name" value="gastricsin"/>
    <property type="match status" value="1"/>
</dbReference>
<dbReference type="FunFam" id="2.40.70.10:FF:000006">
    <property type="entry name" value="Cathepsin E"/>
    <property type="match status" value="1"/>
</dbReference>
<dbReference type="FunFam" id="2.40.70.10:FF:000004">
    <property type="entry name" value="Pepsin A"/>
    <property type="match status" value="1"/>
</dbReference>
<dbReference type="Gene3D" id="6.10.140.60">
    <property type="match status" value="1"/>
</dbReference>
<dbReference type="Gene3D" id="2.40.70.10">
    <property type="entry name" value="Acid Proteases"/>
    <property type="match status" value="2"/>
</dbReference>
<dbReference type="InterPro" id="IPR001461">
    <property type="entry name" value="Aspartic_peptidase_A1"/>
</dbReference>
<dbReference type="InterPro" id="IPR001969">
    <property type="entry name" value="Aspartic_peptidase_AS"/>
</dbReference>
<dbReference type="InterPro" id="IPR012848">
    <property type="entry name" value="Aspartic_peptidase_N"/>
</dbReference>
<dbReference type="InterPro" id="IPR033121">
    <property type="entry name" value="PEPTIDASE_A1"/>
</dbReference>
<dbReference type="InterPro" id="IPR021109">
    <property type="entry name" value="Peptidase_aspartic_dom_sf"/>
</dbReference>
<dbReference type="PANTHER" id="PTHR47966">
    <property type="entry name" value="BETA-SITE APP-CLEAVING ENZYME, ISOFORM A-RELATED"/>
    <property type="match status" value="1"/>
</dbReference>
<dbReference type="PANTHER" id="PTHR47966:SF72">
    <property type="entry name" value="GASTRICSIN"/>
    <property type="match status" value="1"/>
</dbReference>
<dbReference type="Pfam" id="PF07966">
    <property type="entry name" value="A1_Propeptide"/>
    <property type="match status" value="1"/>
</dbReference>
<dbReference type="Pfam" id="PF00026">
    <property type="entry name" value="Asp"/>
    <property type="match status" value="1"/>
</dbReference>
<dbReference type="PRINTS" id="PR00792">
    <property type="entry name" value="PEPSIN"/>
</dbReference>
<dbReference type="SUPFAM" id="SSF50630">
    <property type="entry name" value="Acid proteases"/>
    <property type="match status" value="1"/>
</dbReference>
<dbReference type="PROSITE" id="PS00141">
    <property type="entry name" value="ASP_PROTEASE"/>
    <property type="match status" value="2"/>
</dbReference>
<dbReference type="PROSITE" id="PS51767">
    <property type="entry name" value="PEPTIDASE_A1"/>
    <property type="match status" value="1"/>
</dbReference>